<name>EFP_ECOLU</name>
<reference key="1">
    <citation type="journal article" date="2009" name="PLoS Genet.">
        <title>Organised genome dynamics in the Escherichia coli species results in highly diverse adaptive paths.</title>
        <authorList>
            <person name="Touchon M."/>
            <person name="Hoede C."/>
            <person name="Tenaillon O."/>
            <person name="Barbe V."/>
            <person name="Baeriswyl S."/>
            <person name="Bidet P."/>
            <person name="Bingen E."/>
            <person name="Bonacorsi S."/>
            <person name="Bouchier C."/>
            <person name="Bouvet O."/>
            <person name="Calteau A."/>
            <person name="Chiapello H."/>
            <person name="Clermont O."/>
            <person name="Cruveiller S."/>
            <person name="Danchin A."/>
            <person name="Diard M."/>
            <person name="Dossat C."/>
            <person name="Karoui M.E."/>
            <person name="Frapy E."/>
            <person name="Garry L."/>
            <person name="Ghigo J.M."/>
            <person name="Gilles A.M."/>
            <person name="Johnson J."/>
            <person name="Le Bouguenec C."/>
            <person name="Lescat M."/>
            <person name="Mangenot S."/>
            <person name="Martinez-Jehanne V."/>
            <person name="Matic I."/>
            <person name="Nassif X."/>
            <person name="Oztas S."/>
            <person name="Petit M.A."/>
            <person name="Pichon C."/>
            <person name="Rouy Z."/>
            <person name="Ruf C.S."/>
            <person name="Schneider D."/>
            <person name="Tourret J."/>
            <person name="Vacherie B."/>
            <person name="Vallenet D."/>
            <person name="Medigue C."/>
            <person name="Rocha E.P.C."/>
            <person name="Denamur E."/>
        </authorList>
    </citation>
    <scope>NUCLEOTIDE SEQUENCE [LARGE SCALE GENOMIC DNA]</scope>
    <source>
        <strain>UMN026 / ExPEC</strain>
    </source>
</reference>
<gene>
    <name evidence="1" type="primary">efp</name>
    <name type="ordered locus">ECUMN_4682</name>
</gene>
<protein>
    <recommendedName>
        <fullName evidence="1">Elongation factor P</fullName>
        <shortName evidence="1">EF-P</shortName>
    </recommendedName>
</protein>
<proteinExistence type="inferred from homology"/>
<comment type="function">
    <text evidence="1">Involved in peptide bond synthesis. Alleviates ribosome stalling that occurs when 3 or more consecutive Pro residues or the sequence PPG is present in a protein, possibly by augmenting the peptidyl transferase activity of the ribosome. Modification of Lys-34 is required for alleviation.</text>
</comment>
<comment type="pathway">
    <text evidence="1">Protein biosynthesis; polypeptide chain elongation.</text>
</comment>
<comment type="subcellular location">
    <subcellularLocation>
        <location evidence="1">Cytoplasm</location>
    </subcellularLocation>
</comment>
<comment type="PTM">
    <text evidence="1">Is beta-lysylated on the epsilon-amino group of Lys-34 by the combined action of EpmA and EpmB, and then hydroxylated on the C5 position of the same residue by EpmC. Lysylation is critical for the stimulatory effect of EF-P on peptide-bond formation. The lysylation moiety would extend toward the peptidyltransferase center and stabilize the terminal 3-CCA end of the tRNA. The hydroxylation of the C5 position on Lys-34 would allow additional potential stabilizing hydrogen-bond interactions with the P-tRNA.</text>
</comment>
<comment type="similarity">
    <text evidence="1">Belongs to the elongation factor P family.</text>
</comment>
<sequence>MATYYSNDFRAGLKIMLDGEPYAVEASEFVKPGKGQAFARVKLRRLLTGTRVEKTFKSTDSAEGADVVDMNLTYLYNDGEFWHFMNNETFEQLSADAKAIGDNAKWLLDQAECIVTLWNGQPISVTPPNFVELEIVDTDPGLKGDTAGTGGKPATLSTGAVVKVPLFVQIGEVIKVDTRSGEYVSRVK</sequence>
<organism>
    <name type="scientific">Escherichia coli O17:K52:H18 (strain UMN026 / ExPEC)</name>
    <dbReference type="NCBI Taxonomy" id="585056"/>
    <lineage>
        <taxon>Bacteria</taxon>
        <taxon>Pseudomonadati</taxon>
        <taxon>Pseudomonadota</taxon>
        <taxon>Gammaproteobacteria</taxon>
        <taxon>Enterobacterales</taxon>
        <taxon>Enterobacteriaceae</taxon>
        <taxon>Escherichia</taxon>
    </lineage>
</organism>
<accession>B7NG85</accession>
<feature type="chain" id="PRO_1000117898" description="Elongation factor P">
    <location>
        <begin position="1"/>
        <end position="188"/>
    </location>
</feature>
<feature type="modified residue" description="N6-(3,6-diaminohexanoyl)-5-hydroxylysine" evidence="1">
    <location>
        <position position="34"/>
    </location>
</feature>
<evidence type="ECO:0000255" key="1">
    <source>
        <dbReference type="HAMAP-Rule" id="MF_00141"/>
    </source>
</evidence>
<dbReference type="EMBL" id="CU928163">
    <property type="protein sequence ID" value="CAR15797.1"/>
    <property type="molecule type" value="Genomic_DNA"/>
</dbReference>
<dbReference type="RefSeq" id="WP_000257278.1">
    <property type="nucleotide sequence ID" value="NC_011751.1"/>
</dbReference>
<dbReference type="RefSeq" id="YP_002415281.1">
    <property type="nucleotide sequence ID" value="NC_011751.1"/>
</dbReference>
<dbReference type="SMR" id="B7NG85"/>
<dbReference type="STRING" id="585056.ECUMN_4682"/>
<dbReference type="GeneID" id="93777677"/>
<dbReference type="KEGG" id="eum:ECUMN_4682"/>
<dbReference type="PATRIC" id="fig|585056.7.peg.4846"/>
<dbReference type="HOGENOM" id="CLU_074944_0_0_6"/>
<dbReference type="UniPathway" id="UPA00345"/>
<dbReference type="Proteomes" id="UP000007097">
    <property type="component" value="Chromosome"/>
</dbReference>
<dbReference type="GO" id="GO:0005829">
    <property type="term" value="C:cytosol"/>
    <property type="evidence" value="ECO:0007669"/>
    <property type="project" value="UniProtKB-ARBA"/>
</dbReference>
<dbReference type="GO" id="GO:0003746">
    <property type="term" value="F:translation elongation factor activity"/>
    <property type="evidence" value="ECO:0007669"/>
    <property type="project" value="UniProtKB-UniRule"/>
</dbReference>
<dbReference type="GO" id="GO:0043043">
    <property type="term" value="P:peptide biosynthetic process"/>
    <property type="evidence" value="ECO:0007669"/>
    <property type="project" value="InterPro"/>
</dbReference>
<dbReference type="CDD" id="cd04470">
    <property type="entry name" value="S1_EF-P_repeat_1"/>
    <property type="match status" value="1"/>
</dbReference>
<dbReference type="CDD" id="cd05794">
    <property type="entry name" value="S1_EF-P_repeat_2"/>
    <property type="match status" value="1"/>
</dbReference>
<dbReference type="FunFam" id="2.30.30.30:FF:000003">
    <property type="entry name" value="Elongation factor P"/>
    <property type="match status" value="1"/>
</dbReference>
<dbReference type="FunFam" id="2.40.50.140:FF:000004">
    <property type="entry name" value="Elongation factor P"/>
    <property type="match status" value="1"/>
</dbReference>
<dbReference type="FunFam" id="2.40.50.140:FF:000009">
    <property type="entry name" value="Elongation factor P"/>
    <property type="match status" value="1"/>
</dbReference>
<dbReference type="Gene3D" id="2.30.30.30">
    <property type="match status" value="1"/>
</dbReference>
<dbReference type="Gene3D" id="2.40.50.140">
    <property type="entry name" value="Nucleic acid-binding proteins"/>
    <property type="match status" value="2"/>
</dbReference>
<dbReference type="HAMAP" id="MF_00141">
    <property type="entry name" value="EF_P"/>
    <property type="match status" value="1"/>
</dbReference>
<dbReference type="InterPro" id="IPR015365">
    <property type="entry name" value="Elong-fact-P_C"/>
</dbReference>
<dbReference type="InterPro" id="IPR012340">
    <property type="entry name" value="NA-bd_OB-fold"/>
</dbReference>
<dbReference type="InterPro" id="IPR014722">
    <property type="entry name" value="Rib_uL2_dom2"/>
</dbReference>
<dbReference type="InterPro" id="IPR020599">
    <property type="entry name" value="Transl_elong_fac_P/YeiP"/>
</dbReference>
<dbReference type="InterPro" id="IPR013185">
    <property type="entry name" value="Transl_elong_KOW-like"/>
</dbReference>
<dbReference type="InterPro" id="IPR001059">
    <property type="entry name" value="Transl_elong_P/YeiP_cen"/>
</dbReference>
<dbReference type="InterPro" id="IPR013852">
    <property type="entry name" value="Transl_elong_P/YeiP_CS"/>
</dbReference>
<dbReference type="InterPro" id="IPR011768">
    <property type="entry name" value="Transl_elongation_fac_P"/>
</dbReference>
<dbReference type="InterPro" id="IPR008991">
    <property type="entry name" value="Translation_prot_SH3-like_sf"/>
</dbReference>
<dbReference type="NCBIfam" id="TIGR00038">
    <property type="entry name" value="efp"/>
    <property type="match status" value="1"/>
</dbReference>
<dbReference type="NCBIfam" id="NF001810">
    <property type="entry name" value="PRK00529.1"/>
    <property type="match status" value="1"/>
</dbReference>
<dbReference type="PANTHER" id="PTHR30053">
    <property type="entry name" value="ELONGATION FACTOR P"/>
    <property type="match status" value="1"/>
</dbReference>
<dbReference type="PANTHER" id="PTHR30053:SF12">
    <property type="entry name" value="ELONGATION FACTOR P (EF-P) FAMILY PROTEIN"/>
    <property type="match status" value="1"/>
</dbReference>
<dbReference type="Pfam" id="PF01132">
    <property type="entry name" value="EFP"/>
    <property type="match status" value="1"/>
</dbReference>
<dbReference type="Pfam" id="PF08207">
    <property type="entry name" value="EFP_N"/>
    <property type="match status" value="1"/>
</dbReference>
<dbReference type="Pfam" id="PF09285">
    <property type="entry name" value="Elong-fact-P_C"/>
    <property type="match status" value="1"/>
</dbReference>
<dbReference type="PIRSF" id="PIRSF005901">
    <property type="entry name" value="EF-P"/>
    <property type="match status" value="1"/>
</dbReference>
<dbReference type="SMART" id="SM01185">
    <property type="entry name" value="EFP"/>
    <property type="match status" value="1"/>
</dbReference>
<dbReference type="SMART" id="SM00841">
    <property type="entry name" value="Elong-fact-P_C"/>
    <property type="match status" value="1"/>
</dbReference>
<dbReference type="SUPFAM" id="SSF50249">
    <property type="entry name" value="Nucleic acid-binding proteins"/>
    <property type="match status" value="2"/>
</dbReference>
<dbReference type="SUPFAM" id="SSF50104">
    <property type="entry name" value="Translation proteins SH3-like domain"/>
    <property type="match status" value="1"/>
</dbReference>
<dbReference type="PROSITE" id="PS01275">
    <property type="entry name" value="EFP"/>
    <property type="match status" value="1"/>
</dbReference>
<keyword id="KW-0963">Cytoplasm</keyword>
<keyword id="KW-0251">Elongation factor</keyword>
<keyword id="KW-0379">Hydroxylation</keyword>
<keyword id="KW-0648">Protein biosynthesis</keyword>